<proteinExistence type="inferred from homology"/>
<feature type="chain" id="PRO_0000338737" description="3-demethoxyubiquinol 3-hydroxylase">
    <location>
        <begin position="1"/>
        <end position="217"/>
    </location>
</feature>
<feature type="binding site" evidence="1">
    <location>
        <position position="66"/>
    </location>
    <ligand>
        <name>Fe cation</name>
        <dbReference type="ChEBI" id="CHEBI:24875"/>
        <label>1</label>
    </ligand>
</feature>
<feature type="binding site" evidence="1">
    <location>
        <position position="96"/>
    </location>
    <ligand>
        <name>Fe cation</name>
        <dbReference type="ChEBI" id="CHEBI:24875"/>
        <label>1</label>
    </ligand>
</feature>
<feature type="binding site" evidence="1">
    <location>
        <position position="96"/>
    </location>
    <ligand>
        <name>Fe cation</name>
        <dbReference type="ChEBI" id="CHEBI:24875"/>
        <label>2</label>
    </ligand>
</feature>
<feature type="binding site" evidence="1">
    <location>
        <position position="99"/>
    </location>
    <ligand>
        <name>Fe cation</name>
        <dbReference type="ChEBI" id="CHEBI:24875"/>
        <label>1</label>
    </ligand>
</feature>
<feature type="binding site" evidence="1">
    <location>
        <position position="148"/>
    </location>
    <ligand>
        <name>Fe cation</name>
        <dbReference type="ChEBI" id="CHEBI:24875"/>
        <label>2</label>
    </ligand>
</feature>
<feature type="binding site" evidence="1">
    <location>
        <position position="180"/>
    </location>
    <ligand>
        <name>Fe cation</name>
        <dbReference type="ChEBI" id="CHEBI:24875"/>
        <label>1</label>
    </ligand>
</feature>
<feature type="binding site" evidence="1">
    <location>
        <position position="180"/>
    </location>
    <ligand>
        <name>Fe cation</name>
        <dbReference type="ChEBI" id="CHEBI:24875"/>
        <label>2</label>
    </ligand>
</feature>
<feature type="binding site" evidence="1">
    <location>
        <position position="183"/>
    </location>
    <ligand>
        <name>Fe cation</name>
        <dbReference type="ChEBI" id="CHEBI:24875"/>
        <label>2</label>
    </ligand>
</feature>
<name>COQ7_XANOR</name>
<dbReference type="EC" id="1.14.99.60" evidence="1"/>
<dbReference type="EMBL" id="AE013598">
    <property type="protein sequence ID" value="AAW77408.1"/>
    <property type="status" value="ALT_INIT"/>
    <property type="molecule type" value="Genomic_DNA"/>
</dbReference>
<dbReference type="SMR" id="Q5GV65"/>
<dbReference type="STRING" id="291331.XOO4154"/>
<dbReference type="KEGG" id="xoo:XOO4154"/>
<dbReference type="HOGENOM" id="CLU_088601_0_0_6"/>
<dbReference type="UniPathway" id="UPA00232"/>
<dbReference type="Proteomes" id="UP000006735">
    <property type="component" value="Chromosome"/>
</dbReference>
<dbReference type="GO" id="GO:0005886">
    <property type="term" value="C:plasma membrane"/>
    <property type="evidence" value="ECO:0007669"/>
    <property type="project" value="UniProtKB-SubCell"/>
</dbReference>
<dbReference type="GO" id="GO:0008682">
    <property type="term" value="F:3-demethoxyubiquinol 3-hydroxylase activity"/>
    <property type="evidence" value="ECO:0007669"/>
    <property type="project" value="UniProtKB-EC"/>
</dbReference>
<dbReference type="GO" id="GO:0046872">
    <property type="term" value="F:metal ion binding"/>
    <property type="evidence" value="ECO:0007669"/>
    <property type="project" value="UniProtKB-KW"/>
</dbReference>
<dbReference type="GO" id="GO:0006744">
    <property type="term" value="P:ubiquinone biosynthetic process"/>
    <property type="evidence" value="ECO:0007669"/>
    <property type="project" value="UniProtKB-UniRule"/>
</dbReference>
<dbReference type="CDD" id="cd01042">
    <property type="entry name" value="DMQH"/>
    <property type="match status" value="1"/>
</dbReference>
<dbReference type="FunFam" id="1.20.1260.10:FF:000013">
    <property type="entry name" value="2-nonaprenyl-3-methyl-6-methoxy-1,4-benzoquinol hydroxylase"/>
    <property type="match status" value="1"/>
</dbReference>
<dbReference type="Gene3D" id="1.20.1260.10">
    <property type="match status" value="1"/>
</dbReference>
<dbReference type="HAMAP" id="MF_01658">
    <property type="entry name" value="COQ7"/>
    <property type="match status" value="1"/>
</dbReference>
<dbReference type="InterPro" id="IPR047809">
    <property type="entry name" value="COQ7_proteobact"/>
</dbReference>
<dbReference type="InterPro" id="IPR012347">
    <property type="entry name" value="Ferritin-like"/>
</dbReference>
<dbReference type="InterPro" id="IPR009078">
    <property type="entry name" value="Ferritin-like_SF"/>
</dbReference>
<dbReference type="InterPro" id="IPR011566">
    <property type="entry name" value="Ubq_synth_Coq7"/>
</dbReference>
<dbReference type="NCBIfam" id="NF033656">
    <property type="entry name" value="DMQ_monoox_COQ7"/>
    <property type="match status" value="1"/>
</dbReference>
<dbReference type="PANTHER" id="PTHR11237:SF4">
    <property type="entry name" value="5-DEMETHOXYUBIQUINONE HYDROXYLASE, MITOCHONDRIAL"/>
    <property type="match status" value="1"/>
</dbReference>
<dbReference type="PANTHER" id="PTHR11237">
    <property type="entry name" value="COENZYME Q10 BIOSYNTHESIS PROTEIN 7"/>
    <property type="match status" value="1"/>
</dbReference>
<dbReference type="Pfam" id="PF03232">
    <property type="entry name" value="COQ7"/>
    <property type="match status" value="1"/>
</dbReference>
<dbReference type="SUPFAM" id="SSF47240">
    <property type="entry name" value="Ferritin-like"/>
    <property type="match status" value="1"/>
</dbReference>
<evidence type="ECO:0000255" key="1">
    <source>
        <dbReference type="HAMAP-Rule" id="MF_01658"/>
    </source>
</evidence>
<evidence type="ECO:0000305" key="2"/>
<protein>
    <recommendedName>
        <fullName evidence="1">3-demethoxyubiquinol 3-hydroxylase</fullName>
        <shortName evidence="1">DMQ hydroxylase</shortName>
        <ecNumber evidence="1">1.14.99.60</ecNumber>
    </recommendedName>
    <alternativeName>
        <fullName evidence="1">2-nonaprenyl-3-methyl-6-methoxy-1,4-benzoquinol hydroxylase</fullName>
    </alternativeName>
</protein>
<gene>
    <name evidence="1" type="primary">coq7</name>
    <name type="ordered locus">XOO4154</name>
</gene>
<keyword id="KW-1003">Cell membrane</keyword>
<keyword id="KW-0408">Iron</keyword>
<keyword id="KW-0472">Membrane</keyword>
<keyword id="KW-0479">Metal-binding</keyword>
<keyword id="KW-0503">Monooxygenase</keyword>
<keyword id="KW-0560">Oxidoreductase</keyword>
<keyword id="KW-1185">Reference proteome</keyword>
<keyword id="KW-0831">Ubiquinone biosynthesis</keyword>
<reference key="1">
    <citation type="journal article" date="2005" name="Nucleic Acids Res.">
        <title>The genome sequence of Xanthomonas oryzae pathovar oryzae KACC10331, the bacterial blight pathogen of rice.</title>
        <authorList>
            <person name="Lee B.-M."/>
            <person name="Park Y.-J."/>
            <person name="Park D.-S."/>
            <person name="Kang H.-W."/>
            <person name="Kim J.-G."/>
            <person name="Song E.-S."/>
            <person name="Park I.-C."/>
            <person name="Yoon U.-H."/>
            <person name="Hahn J.-H."/>
            <person name="Koo B.-S."/>
            <person name="Lee G.-B."/>
            <person name="Kim H."/>
            <person name="Park H.-S."/>
            <person name="Yoon K.-O."/>
            <person name="Kim J.-H."/>
            <person name="Jung C.-H."/>
            <person name="Koh N.-H."/>
            <person name="Seo J.-S."/>
            <person name="Go S.-J."/>
        </authorList>
    </citation>
    <scope>NUCLEOTIDE SEQUENCE [LARGE SCALE GENOMIC DNA]</scope>
    <source>
        <strain>KACC10331 / KXO85</strain>
    </source>
</reference>
<accession>Q5GV65</accession>
<comment type="function">
    <text evidence="1">Catalyzes the hydroxylation of 2-nonaprenyl-3-methyl-6-methoxy-1,4-benzoquinol during ubiquinone biosynthesis.</text>
</comment>
<comment type="catalytic activity">
    <reaction evidence="1">
        <text>a 5-methoxy-2-methyl-3-(all-trans-polyprenyl)benzene-1,4-diol + AH2 + O2 = a 3-demethylubiquinol + A + H2O</text>
        <dbReference type="Rhea" id="RHEA:50908"/>
        <dbReference type="Rhea" id="RHEA-COMP:10859"/>
        <dbReference type="Rhea" id="RHEA-COMP:10914"/>
        <dbReference type="ChEBI" id="CHEBI:13193"/>
        <dbReference type="ChEBI" id="CHEBI:15377"/>
        <dbReference type="ChEBI" id="CHEBI:15379"/>
        <dbReference type="ChEBI" id="CHEBI:17499"/>
        <dbReference type="ChEBI" id="CHEBI:84167"/>
        <dbReference type="ChEBI" id="CHEBI:84422"/>
        <dbReference type="EC" id="1.14.99.60"/>
    </reaction>
</comment>
<comment type="cofactor">
    <cofactor evidence="1">
        <name>Fe cation</name>
        <dbReference type="ChEBI" id="CHEBI:24875"/>
    </cofactor>
    <text evidence="1">Binds 2 iron ions per subunit.</text>
</comment>
<comment type="pathway">
    <text evidence="1">Cofactor biosynthesis; ubiquinone biosynthesis.</text>
</comment>
<comment type="subcellular location">
    <subcellularLocation>
        <location evidence="1">Cell membrane</location>
        <topology evidence="1">Peripheral membrane protein</topology>
    </subcellularLocation>
</comment>
<comment type="similarity">
    <text evidence="1">Belongs to the COQ7 family.</text>
</comment>
<comment type="sequence caution" evidence="2">
    <conflict type="erroneous initiation">
        <sequence resource="EMBL-CDS" id="AAW77408"/>
    </conflict>
</comment>
<organism>
    <name type="scientific">Xanthomonas oryzae pv. oryzae (strain KACC10331 / KXO85)</name>
    <dbReference type="NCBI Taxonomy" id="291331"/>
    <lineage>
        <taxon>Bacteria</taxon>
        <taxon>Pseudomonadati</taxon>
        <taxon>Pseudomonadota</taxon>
        <taxon>Gammaproteobacteria</taxon>
        <taxon>Lysobacterales</taxon>
        <taxon>Lysobacteraceae</taxon>
        <taxon>Xanthomonas</taxon>
    </lineage>
</organism>
<sequence>MTQTSPSRLHSPLDRLLVEAQRALDTVFGNPPAERPNPAADTPDIALDPEQRRHAAGLMRINHVGEVCAQGLYFGQAAVARDAHTQHHLLEAAQEETDHLAWCADRLHELDSRPSLLNPLWYAGSYALGALAGLRGDDWSLGFVVETERQVEAHLDEHLETLPDIDQRSRAILRVMKIDEARHADQAEQAGARQLPAPIPGAMALASKLMKTVAYRL</sequence>